<gene>
    <name evidence="1" type="primary">mnmE</name>
    <name evidence="1" type="synonym">thdF</name>
    <name evidence="1" type="synonym">trmE</name>
    <name type="ordered locus">SPy_1071</name>
    <name type="ordered locus">M5005_Spy0794</name>
</gene>
<name>MNME_STRP1</name>
<dbReference type="EC" id="3.6.-.-" evidence="1"/>
<dbReference type="EMBL" id="AE004092">
    <property type="protein sequence ID" value="AAK33958.1"/>
    <property type="molecule type" value="Genomic_DNA"/>
</dbReference>
<dbReference type="EMBL" id="CP000017">
    <property type="protein sequence ID" value="AAZ51412.1"/>
    <property type="molecule type" value="Genomic_DNA"/>
</dbReference>
<dbReference type="RefSeq" id="NP_269237.1">
    <property type="nucleotide sequence ID" value="NC_002737.2"/>
</dbReference>
<dbReference type="SMR" id="Q99ZU0"/>
<dbReference type="PaxDb" id="1314-HKU360_00858"/>
<dbReference type="KEGG" id="spy:SPy_1071"/>
<dbReference type="KEGG" id="spz:M5005_Spy0794"/>
<dbReference type="PATRIC" id="fig|160490.10.peg.926"/>
<dbReference type="HOGENOM" id="CLU_019624_4_1_9"/>
<dbReference type="OMA" id="EFHCHGG"/>
<dbReference type="Proteomes" id="UP000000750">
    <property type="component" value="Chromosome"/>
</dbReference>
<dbReference type="GO" id="GO:0005829">
    <property type="term" value="C:cytosol"/>
    <property type="evidence" value="ECO:0007669"/>
    <property type="project" value="TreeGrafter"/>
</dbReference>
<dbReference type="GO" id="GO:0005525">
    <property type="term" value="F:GTP binding"/>
    <property type="evidence" value="ECO:0007669"/>
    <property type="project" value="UniProtKB-UniRule"/>
</dbReference>
<dbReference type="GO" id="GO:0003924">
    <property type="term" value="F:GTPase activity"/>
    <property type="evidence" value="ECO:0007669"/>
    <property type="project" value="UniProtKB-UniRule"/>
</dbReference>
<dbReference type="GO" id="GO:0046872">
    <property type="term" value="F:metal ion binding"/>
    <property type="evidence" value="ECO:0007669"/>
    <property type="project" value="UniProtKB-KW"/>
</dbReference>
<dbReference type="GO" id="GO:0030488">
    <property type="term" value="P:tRNA methylation"/>
    <property type="evidence" value="ECO:0007669"/>
    <property type="project" value="TreeGrafter"/>
</dbReference>
<dbReference type="GO" id="GO:0002098">
    <property type="term" value="P:tRNA wobble uridine modification"/>
    <property type="evidence" value="ECO:0007669"/>
    <property type="project" value="TreeGrafter"/>
</dbReference>
<dbReference type="CDD" id="cd04164">
    <property type="entry name" value="trmE"/>
    <property type="match status" value="1"/>
</dbReference>
<dbReference type="CDD" id="cd14858">
    <property type="entry name" value="TrmE_N"/>
    <property type="match status" value="1"/>
</dbReference>
<dbReference type="FunFam" id="3.30.1360.120:FF:000003">
    <property type="entry name" value="tRNA modification GTPase MnmE"/>
    <property type="match status" value="1"/>
</dbReference>
<dbReference type="FunFam" id="3.40.50.300:FF:000494">
    <property type="entry name" value="tRNA modification GTPase MnmE"/>
    <property type="match status" value="1"/>
</dbReference>
<dbReference type="Gene3D" id="3.40.50.300">
    <property type="entry name" value="P-loop containing nucleotide triphosphate hydrolases"/>
    <property type="match status" value="1"/>
</dbReference>
<dbReference type="Gene3D" id="3.30.1360.120">
    <property type="entry name" value="Probable tRNA modification gtpase trme, domain 1"/>
    <property type="match status" value="1"/>
</dbReference>
<dbReference type="Gene3D" id="1.20.120.430">
    <property type="entry name" value="tRNA modification GTPase MnmE domain 2"/>
    <property type="match status" value="1"/>
</dbReference>
<dbReference type="HAMAP" id="MF_00379">
    <property type="entry name" value="GTPase_MnmE"/>
    <property type="match status" value="1"/>
</dbReference>
<dbReference type="InterPro" id="IPR031168">
    <property type="entry name" value="G_TrmE"/>
</dbReference>
<dbReference type="InterPro" id="IPR006073">
    <property type="entry name" value="GTP-bd"/>
</dbReference>
<dbReference type="InterPro" id="IPR018948">
    <property type="entry name" value="GTP-bd_TrmE_N"/>
</dbReference>
<dbReference type="InterPro" id="IPR004520">
    <property type="entry name" value="GTPase_MnmE"/>
</dbReference>
<dbReference type="InterPro" id="IPR027368">
    <property type="entry name" value="MnmE_dom2"/>
</dbReference>
<dbReference type="InterPro" id="IPR025867">
    <property type="entry name" value="MnmE_helical"/>
</dbReference>
<dbReference type="InterPro" id="IPR027417">
    <property type="entry name" value="P-loop_NTPase"/>
</dbReference>
<dbReference type="InterPro" id="IPR005225">
    <property type="entry name" value="Small_GTP-bd"/>
</dbReference>
<dbReference type="InterPro" id="IPR027266">
    <property type="entry name" value="TrmE/GcvT_dom1"/>
</dbReference>
<dbReference type="NCBIfam" id="TIGR00450">
    <property type="entry name" value="mnmE_trmE_thdF"/>
    <property type="match status" value="1"/>
</dbReference>
<dbReference type="NCBIfam" id="NF003661">
    <property type="entry name" value="PRK05291.1-3"/>
    <property type="match status" value="1"/>
</dbReference>
<dbReference type="NCBIfam" id="TIGR00231">
    <property type="entry name" value="small_GTP"/>
    <property type="match status" value="1"/>
</dbReference>
<dbReference type="PANTHER" id="PTHR42714">
    <property type="entry name" value="TRNA MODIFICATION GTPASE GTPBP3"/>
    <property type="match status" value="1"/>
</dbReference>
<dbReference type="PANTHER" id="PTHR42714:SF2">
    <property type="entry name" value="TRNA MODIFICATION GTPASE GTPBP3, MITOCHONDRIAL"/>
    <property type="match status" value="1"/>
</dbReference>
<dbReference type="Pfam" id="PF01926">
    <property type="entry name" value="MMR_HSR1"/>
    <property type="match status" value="1"/>
</dbReference>
<dbReference type="Pfam" id="PF12631">
    <property type="entry name" value="MnmE_helical"/>
    <property type="match status" value="1"/>
</dbReference>
<dbReference type="Pfam" id="PF10396">
    <property type="entry name" value="TrmE_N"/>
    <property type="match status" value="1"/>
</dbReference>
<dbReference type="SUPFAM" id="SSF52540">
    <property type="entry name" value="P-loop containing nucleoside triphosphate hydrolases"/>
    <property type="match status" value="1"/>
</dbReference>
<dbReference type="SUPFAM" id="SSF116878">
    <property type="entry name" value="TrmE connector domain"/>
    <property type="match status" value="1"/>
</dbReference>
<dbReference type="PROSITE" id="PS51709">
    <property type="entry name" value="G_TRME"/>
    <property type="match status" value="1"/>
</dbReference>
<accession>Q99ZU0</accession>
<accession>Q48Z06</accession>
<organism>
    <name type="scientific">Streptococcus pyogenes serotype M1</name>
    <dbReference type="NCBI Taxonomy" id="301447"/>
    <lineage>
        <taxon>Bacteria</taxon>
        <taxon>Bacillati</taxon>
        <taxon>Bacillota</taxon>
        <taxon>Bacilli</taxon>
        <taxon>Lactobacillales</taxon>
        <taxon>Streptococcaceae</taxon>
        <taxon>Streptococcus</taxon>
    </lineage>
</organism>
<feature type="chain" id="PRO_0000188931" description="tRNA modification GTPase MnmE">
    <location>
        <begin position="1"/>
        <end position="458"/>
    </location>
</feature>
<feature type="domain" description="TrmE-type G">
    <location>
        <begin position="224"/>
        <end position="378"/>
    </location>
</feature>
<feature type="binding site" evidence="1">
    <location>
        <position position="26"/>
    </location>
    <ligand>
        <name>(6S)-5-formyl-5,6,7,8-tetrahydrofolate</name>
        <dbReference type="ChEBI" id="CHEBI:57457"/>
    </ligand>
</feature>
<feature type="binding site" evidence="1">
    <location>
        <position position="88"/>
    </location>
    <ligand>
        <name>(6S)-5-formyl-5,6,7,8-tetrahydrofolate</name>
        <dbReference type="ChEBI" id="CHEBI:57457"/>
    </ligand>
</feature>
<feature type="binding site" evidence="1">
    <location>
        <position position="127"/>
    </location>
    <ligand>
        <name>(6S)-5-formyl-5,6,7,8-tetrahydrofolate</name>
        <dbReference type="ChEBI" id="CHEBI:57457"/>
    </ligand>
</feature>
<feature type="binding site" evidence="1">
    <location>
        <begin position="234"/>
        <end position="239"/>
    </location>
    <ligand>
        <name>GTP</name>
        <dbReference type="ChEBI" id="CHEBI:37565"/>
    </ligand>
</feature>
<feature type="binding site" evidence="1">
    <location>
        <position position="234"/>
    </location>
    <ligand>
        <name>K(+)</name>
        <dbReference type="ChEBI" id="CHEBI:29103"/>
    </ligand>
</feature>
<feature type="binding site" evidence="1">
    <location>
        <position position="238"/>
    </location>
    <ligand>
        <name>Mg(2+)</name>
        <dbReference type="ChEBI" id="CHEBI:18420"/>
    </ligand>
</feature>
<feature type="binding site" evidence="1">
    <location>
        <begin position="253"/>
        <end position="259"/>
    </location>
    <ligand>
        <name>GTP</name>
        <dbReference type="ChEBI" id="CHEBI:37565"/>
    </ligand>
</feature>
<feature type="binding site" evidence="1">
    <location>
        <position position="253"/>
    </location>
    <ligand>
        <name>K(+)</name>
        <dbReference type="ChEBI" id="CHEBI:29103"/>
    </ligand>
</feature>
<feature type="binding site" evidence="1">
    <location>
        <position position="255"/>
    </location>
    <ligand>
        <name>K(+)</name>
        <dbReference type="ChEBI" id="CHEBI:29103"/>
    </ligand>
</feature>
<feature type="binding site" evidence="1">
    <location>
        <position position="258"/>
    </location>
    <ligand>
        <name>K(+)</name>
        <dbReference type="ChEBI" id="CHEBI:29103"/>
    </ligand>
</feature>
<feature type="binding site" evidence="1">
    <location>
        <position position="259"/>
    </location>
    <ligand>
        <name>Mg(2+)</name>
        <dbReference type="ChEBI" id="CHEBI:18420"/>
    </ligand>
</feature>
<feature type="binding site" evidence="1">
    <location>
        <begin position="278"/>
        <end position="281"/>
    </location>
    <ligand>
        <name>GTP</name>
        <dbReference type="ChEBI" id="CHEBI:37565"/>
    </ligand>
</feature>
<feature type="binding site" evidence="1">
    <location>
        <position position="458"/>
    </location>
    <ligand>
        <name>(6S)-5-formyl-5,6,7,8-tetrahydrofolate</name>
        <dbReference type="ChEBI" id="CHEBI:57457"/>
    </ligand>
</feature>
<evidence type="ECO:0000255" key="1">
    <source>
        <dbReference type="HAMAP-Rule" id="MF_00379"/>
    </source>
</evidence>
<keyword id="KW-0963">Cytoplasm</keyword>
<keyword id="KW-0342">GTP-binding</keyword>
<keyword id="KW-0378">Hydrolase</keyword>
<keyword id="KW-0460">Magnesium</keyword>
<keyword id="KW-0479">Metal-binding</keyword>
<keyword id="KW-0547">Nucleotide-binding</keyword>
<keyword id="KW-0630">Potassium</keyword>
<keyword id="KW-1185">Reference proteome</keyword>
<keyword id="KW-0819">tRNA processing</keyword>
<comment type="function">
    <text evidence="1">Exhibits a very high intrinsic GTPase hydrolysis rate. Involved in the addition of a carboxymethylaminomethyl (cmnm) group at the wobble position (U34) of certain tRNAs, forming tRNA-cmnm(5)s(2)U34.</text>
</comment>
<comment type="cofactor">
    <cofactor evidence="1">
        <name>K(+)</name>
        <dbReference type="ChEBI" id="CHEBI:29103"/>
    </cofactor>
    <text evidence="1">Binds 1 potassium ion per subunit.</text>
</comment>
<comment type="subunit">
    <text evidence="1">Homodimer. Heterotetramer of two MnmE and two MnmG subunits.</text>
</comment>
<comment type="subcellular location">
    <subcellularLocation>
        <location evidence="1">Cytoplasm</location>
    </subcellularLocation>
</comment>
<comment type="similarity">
    <text evidence="1">Belongs to the TRAFAC class TrmE-Era-EngA-EngB-Septin-like GTPase superfamily. TrmE GTPase family.</text>
</comment>
<protein>
    <recommendedName>
        <fullName evidence="1">tRNA modification GTPase MnmE</fullName>
        <ecNumber evidence="1">3.6.-.-</ecNumber>
    </recommendedName>
</protein>
<proteinExistence type="inferred from homology"/>
<reference key="1">
    <citation type="journal article" date="2001" name="Proc. Natl. Acad. Sci. U.S.A.">
        <title>Complete genome sequence of an M1 strain of Streptococcus pyogenes.</title>
        <authorList>
            <person name="Ferretti J.J."/>
            <person name="McShan W.M."/>
            <person name="Ajdic D.J."/>
            <person name="Savic D.J."/>
            <person name="Savic G."/>
            <person name="Lyon K."/>
            <person name="Primeaux C."/>
            <person name="Sezate S."/>
            <person name="Suvorov A.N."/>
            <person name="Kenton S."/>
            <person name="Lai H.S."/>
            <person name="Lin S.P."/>
            <person name="Qian Y."/>
            <person name="Jia H.G."/>
            <person name="Najar F.Z."/>
            <person name="Ren Q."/>
            <person name="Zhu H."/>
            <person name="Song L."/>
            <person name="White J."/>
            <person name="Yuan X."/>
            <person name="Clifton S.W."/>
            <person name="Roe B.A."/>
            <person name="McLaughlin R.E."/>
        </authorList>
    </citation>
    <scope>NUCLEOTIDE SEQUENCE [LARGE SCALE GENOMIC DNA]</scope>
    <source>
        <strain>ATCC 700294 / SF370 / Serotype M1</strain>
    </source>
</reference>
<reference key="2">
    <citation type="journal article" date="2005" name="J. Infect. Dis.">
        <title>Evolutionary origin and emergence of a highly successful clone of serotype M1 group A Streptococcus involved multiple horizontal gene transfer events.</title>
        <authorList>
            <person name="Sumby P."/>
            <person name="Porcella S.F."/>
            <person name="Madrigal A.G."/>
            <person name="Barbian K.D."/>
            <person name="Virtaneva K."/>
            <person name="Ricklefs S.M."/>
            <person name="Sturdevant D.E."/>
            <person name="Graham M.R."/>
            <person name="Vuopio-Varkila J."/>
            <person name="Hoe N.P."/>
            <person name="Musser J.M."/>
        </authorList>
    </citation>
    <scope>NUCLEOTIDE SEQUENCE [LARGE SCALE GENOMIC DNA]</scope>
    <source>
        <strain>ATCC BAA-947 / MGAS5005 / Serotype M1</strain>
    </source>
</reference>
<sequence length="458" mass="50509">MSITKEFDTITAISTPLGEGAIGIVRLSGTDALAIAQSVFKGKNLEQVASHTINYGHIINPKTGTIIDEVMVSVMLAPKTFTRENVVEINTHGGIAVTNEILQLLIRQGARMAEPGEFTKRAFLNGRVDLTQAEAVMDIIRAKTDKAMTIAVKQLDGSLSQLINDTRQEILNTLAQVEVNIDYPEYDDVEEMTTALLREKTQEFQSLLESLLRTAKRGKILREGLSTAIIGRPNVGKSSLLNNLLREDKAIVTDIAGTTRDVIEEYVNIKGVPLKLVDTAGIRETDDLVEQIGVERSKKALQEADLVLLVLNASEKLTDQDRALLNLSQDSNRIILLNKTDLEQKIELEQLPDDYIPISVLTNQNINLIEDRINQLFFDNAGLVEQDATYLSNARHISLIEKAVQSLEAVNDGLALGMPVDLLQVDLTRTWEILGEITGDAAPDELITQLFSQFCLGK</sequence>